<organism>
    <name type="scientific">Candida albicans (strain SC5314 / ATCC MYA-2876)</name>
    <name type="common">Yeast</name>
    <dbReference type="NCBI Taxonomy" id="237561"/>
    <lineage>
        <taxon>Eukaryota</taxon>
        <taxon>Fungi</taxon>
        <taxon>Dikarya</taxon>
        <taxon>Ascomycota</taxon>
        <taxon>Saccharomycotina</taxon>
        <taxon>Pichiomycetes</taxon>
        <taxon>Debaryomycetaceae</taxon>
        <taxon>Candida/Lodderomyces clade</taxon>
        <taxon>Candida</taxon>
    </lineage>
</organism>
<feature type="chain" id="PRO_0000456545" description="Small ribosomal subunit protein eS7">
    <location>
        <begin position="1"/>
        <end position="186"/>
    </location>
</feature>
<reference key="1">
    <citation type="journal article" date="2004" name="Proc. Natl. Acad. Sci. U.S.A.">
        <title>The diploid genome sequence of Candida albicans.</title>
        <authorList>
            <person name="Jones T."/>
            <person name="Federspiel N.A."/>
            <person name="Chibana H."/>
            <person name="Dungan J."/>
            <person name="Kalman S."/>
            <person name="Magee B.B."/>
            <person name="Newport G."/>
            <person name="Thorstenson Y.R."/>
            <person name="Agabian N."/>
            <person name="Magee P.T."/>
            <person name="Davis R.W."/>
            <person name="Scherer S."/>
        </authorList>
    </citation>
    <scope>NUCLEOTIDE SEQUENCE [LARGE SCALE GENOMIC DNA]</scope>
    <source>
        <strain>SC5314 / ATCC MYA-2876</strain>
    </source>
</reference>
<reference key="2">
    <citation type="journal article" date="2007" name="Genome Biol.">
        <title>Assembly of the Candida albicans genome into sixteen supercontigs aligned on the eight chromosomes.</title>
        <authorList>
            <person name="van het Hoog M."/>
            <person name="Rast T.J."/>
            <person name="Martchenko M."/>
            <person name="Grindle S."/>
            <person name="Dignard D."/>
            <person name="Hogues H."/>
            <person name="Cuomo C."/>
            <person name="Berriman M."/>
            <person name="Scherer S."/>
            <person name="Magee B.B."/>
            <person name="Whiteway M."/>
            <person name="Chibana H."/>
            <person name="Nantel A."/>
            <person name="Magee P.T."/>
        </authorList>
    </citation>
    <scope>GENOME REANNOTATION</scope>
    <source>
        <strain>SC5314 / ATCC MYA-2876</strain>
    </source>
</reference>
<reference key="3">
    <citation type="journal article" date="2013" name="Genome Biol.">
        <title>Assembly of a phased diploid Candida albicans genome facilitates allele-specific measurements and provides a simple model for repeat and indel structure.</title>
        <authorList>
            <person name="Muzzey D."/>
            <person name="Schwartz K."/>
            <person name="Weissman J.S."/>
            <person name="Sherlock G."/>
        </authorList>
    </citation>
    <scope>NUCLEOTIDE SEQUENCE [LARGE SCALE GENOMIC DNA]</scope>
    <scope>GENOME REANNOTATION</scope>
    <source>
        <strain>SC5314 / ATCC MYA-2876</strain>
    </source>
</reference>
<reference evidence="6 7 8" key="4">
    <citation type="journal article" date="2022" name="Sci. Adv.">
        <title>E-site drug specificity of the human pathogen Candida albicans ribosome.</title>
        <authorList>
            <person name="Zgadzay Y."/>
            <person name="Kolosova O."/>
            <person name="Stetsenko A."/>
            <person name="Wu C."/>
            <person name="Bruchlen D."/>
            <person name="Usachev K."/>
            <person name="Validov S."/>
            <person name="Jenner L."/>
            <person name="Rogachev A."/>
            <person name="Yusupova G."/>
            <person name="Sachs M.S."/>
            <person name="Guskov A."/>
            <person name="Yusupov M."/>
        </authorList>
    </citation>
    <scope>STRUCTURE BY ELECTRON MICROSCOPY (2.32 ANGSTROMS) OF THE 80S RIBOSOME</scope>
    <scope>SUBUNIT</scope>
</reference>
<comment type="function">
    <text evidence="1 5">Component of the ribosome, a large ribonucleoprotein complex responsible for the synthesis of proteins in the cell. The small ribosomal subunit (SSU) binds messenger RNAs (mRNAs) and translates the encoded message by selecting cognate aminoacyl-transfer RNA (tRNA) molecules. The large subunit (LSU) contains the ribosomal catalytic site termed the peptidyl transferase center (PTC), which catalyzes the formation of peptide bonds, thereby polymerizing the amino acids delivered by tRNAs into a polypeptide chain. The nascent polypeptides leave the ribosome through a tunnel in the LSU and interact with protein factors that function in enzymatic processing, targeting, and the membrane insertion of nascent chains at the exit of the ribosomal tunnel (Probable). RPS7A is involved in nucleolar processing of pre-18S ribosomal RNA and ribosome assembly (By similarity).</text>
</comment>
<comment type="subunit">
    <text evidence="2">Component of the small ribosomal subunit (PubMed:35613268). Mature ribosomes consist of a small (40S) and a large (60S) subunit (PubMed:35613268). The 40S subunit contains about 32 different proteins and 1 molecule of RNA (18S) (PubMed:35613268). The 60S subunit contains 45 different proteins and 3 molecules of RNA (25S, 5.8S and 5S) (PubMed:35613268).</text>
</comment>
<comment type="subcellular location">
    <subcellularLocation>
        <location evidence="5">Cytoplasm</location>
    </subcellularLocation>
</comment>
<comment type="similarity">
    <text evidence="4">Belongs to the eukaryotic ribosomal protein eS7 family.</text>
</comment>
<keyword id="KW-0002">3D-structure</keyword>
<keyword id="KW-0963">Cytoplasm</keyword>
<keyword id="KW-1185">Reference proteome</keyword>
<keyword id="KW-0687">Ribonucleoprotein</keyword>
<keyword id="KW-0689">Ribosomal protein</keyword>
<evidence type="ECO:0000250" key="1">
    <source>
        <dbReference type="UniProtKB" id="P26786"/>
    </source>
</evidence>
<evidence type="ECO:0000269" key="2">
    <source>
    </source>
</evidence>
<evidence type="ECO:0000303" key="3">
    <source>
    </source>
</evidence>
<evidence type="ECO:0000305" key="4"/>
<evidence type="ECO:0000305" key="5">
    <source>
    </source>
</evidence>
<evidence type="ECO:0007744" key="6">
    <source>
        <dbReference type="PDB" id="7PZY"/>
    </source>
</evidence>
<evidence type="ECO:0007744" key="7">
    <source>
        <dbReference type="PDB" id="7Q0F"/>
    </source>
</evidence>
<evidence type="ECO:0007744" key="8">
    <source>
        <dbReference type="PDB" id="7Q0P"/>
    </source>
</evidence>
<sequence length="186" mass="21247">MSSKILSENPTELELKVAQAFVDLESQADLKAELRPLQFKSIKEIDVNGGKKALAVFVPPPSLQAYRKVQTRLTRELEKKFPDRHVVFLAERRILPKPARKARKQQKRPRSRTLTAVHDKILEDLVFPTEIIGKRVRYLVGGNKIQKVLLDSKDSTAVDYKLDSFQQLYSKLTGKQVVFEIPGESH</sequence>
<name>RS7A_CANAL</name>
<proteinExistence type="evidence at protein level"/>
<dbReference type="EMBL" id="CP017625">
    <property type="protein sequence ID" value="AOW28191.1"/>
    <property type="molecule type" value="Genomic_DNA"/>
</dbReference>
<dbReference type="RefSeq" id="XP_721772.1">
    <property type="nucleotide sequence ID" value="XM_716679.2"/>
</dbReference>
<dbReference type="PDB" id="7PZY">
    <property type="method" value="EM"/>
    <property type="resolution" value="2.32 A"/>
    <property type="chains" value="I=1-186"/>
</dbReference>
<dbReference type="PDB" id="7Q08">
    <property type="method" value="EM"/>
    <property type="resolution" value="2.56 A"/>
    <property type="chains" value="I=1-186"/>
</dbReference>
<dbReference type="PDB" id="7Q0F">
    <property type="method" value="EM"/>
    <property type="resolution" value="2.64 A"/>
    <property type="chains" value="I=1-186"/>
</dbReference>
<dbReference type="PDB" id="7Q0P">
    <property type="method" value="EM"/>
    <property type="resolution" value="2.77 A"/>
    <property type="chains" value="I=1-186"/>
</dbReference>
<dbReference type="PDB" id="7Q0R">
    <property type="method" value="EM"/>
    <property type="resolution" value="2.67 A"/>
    <property type="chains" value="I=1-186"/>
</dbReference>
<dbReference type="PDB" id="8C3A">
    <property type="method" value="X-ray"/>
    <property type="resolution" value="3.00 A"/>
    <property type="chains" value="CU/J=1-186"/>
</dbReference>
<dbReference type="PDB" id="8OGJ">
    <property type="method" value="EM"/>
    <property type="resolution" value="3.10 A"/>
    <property type="chains" value="I=1-186"/>
</dbReference>
<dbReference type="PDB" id="8OH6">
    <property type="method" value="X-ray"/>
    <property type="resolution" value="3.35 A"/>
    <property type="chains" value="CU/J=1-186"/>
</dbReference>
<dbReference type="PDB" id="8OI5">
    <property type="method" value="X-ray"/>
    <property type="resolution" value="2.90 A"/>
    <property type="chains" value="CU/J=1-186"/>
</dbReference>
<dbReference type="PDB" id="8OJ3">
    <property type="method" value="X-ray"/>
    <property type="resolution" value="3.50 A"/>
    <property type="chains" value="CU/J=1-186"/>
</dbReference>
<dbReference type="PDBsum" id="7PZY"/>
<dbReference type="PDBsum" id="7Q08"/>
<dbReference type="PDBsum" id="7Q0F"/>
<dbReference type="PDBsum" id="7Q0P"/>
<dbReference type="PDBsum" id="7Q0R"/>
<dbReference type="PDBsum" id="8C3A"/>
<dbReference type="PDBsum" id="8OGJ"/>
<dbReference type="PDBsum" id="8OH6"/>
<dbReference type="PDBsum" id="8OI5"/>
<dbReference type="PDBsum" id="8OJ3"/>
<dbReference type="EMDB" id="EMD-13737"/>
<dbReference type="EMDB" id="EMD-13741"/>
<dbReference type="EMDB" id="EMD-13744"/>
<dbReference type="EMDB" id="EMD-13749"/>
<dbReference type="EMDB" id="EMD-13750"/>
<dbReference type="SMR" id="Q5AJ93"/>
<dbReference type="FunCoup" id="Q5AJ93">
    <property type="interactions" value="1239"/>
</dbReference>
<dbReference type="STRING" id="237561.Q5AJ93"/>
<dbReference type="EnsemblFungi" id="C3_01490W_A-T">
    <property type="protein sequence ID" value="C3_01490W_A-T-p1"/>
    <property type="gene ID" value="C3_01490W_A"/>
</dbReference>
<dbReference type="GeneID" id="3636573"/>
<dbReference type="KEGG" id="cal:CAALFM_C301490WA"/>
<dbReference type="CGD" id="CAL0000199878">
    <property type="gene designation" value="RPS7A"/>
</dbReference>
<dbReference type="VEuPathDB" id="FungiDB:C3_01490W_A"/>
<dbReference type="eggNOG" id="KOG3320">
    <property type="taxonomic scope" value="Eukaryota"/>
</dbReference>
<dbReference type="HOGENOM" id="CLU_088621_1_2_1"/>
<dbReference type="InParanoid" id="Q5AJ93"/>
<dbReference type="OMA" id="AAYHKVQ"/>
<dbReference type="OrthoDB" id="1724687at2759"/>
<dbReference type="Proteomes" id="UP000000559">
    <property type="component" value="Chromosome 3"/>
</dbReference>
<dbReference type="GO" id="GO:0009986">
    <property type="term" value="C:cell surface"/>
    <property type="evidence" value="ECO:0000314"/>
    <property type="project" value="CGD"/>
</dbReference>
<dbReference type="GO" id="GO:0022627">
    <property type="term" value="C:cytosolic small ribosomal subunit"/>
    <property type="evidence" value="ECO:0000318"/>
    <property type="project" value="GO_Central"/>
</dbReference>
<dbReference type="GO" id="GO:0032040">
    <property type="term" value="C:small-subunit processome"/>
    <property type="evidence" value="ECO:0000318"/>
    <property type="project" value="GO_Central"/>
</dbReference>
<dbReference type="GO" id="GO:0003735">
    <property type="term" value="F:structural constituent of ribosome"/>
    <property type="evidence" value="ECO:0007669"/>
    <property type="project" value="InterPro"/>
</dbReference>
<dbReference type="GO" id="GO:0042274">
    <property type="term" value="P:ribosomal small subunit biogenesis"/>
    <property type="evidence" value="ECO:0000318"/>
    <property type="project" value="GO_Central"/>
</dbReference>
<dbReference type="GO" id="GO:0006364">
    <property type="term" value="P:rRNA processing"/>
    <property type="evidence" value="ECO:0000318"/>
    <property type="project" value="GO_Central"/>
</dbReference>
<dbReference type="GO" id="GO:0006412">
    <property type="term" value="P:translation"/>
    <property type="evidence" value="ECO:0007669"/>
    <property type="project" value="InterPro"/>
</dbReference>
<dbReference type="InterPro" id="IPR000554">
    <property type="entry name" value="Ribosomal_eS7"/>
</dbReference>
<dbReference type="InterPro" id="IPR047861">
    <property type="entry name" value="Ribosomal_eS7_CS"/>
</dbReference>
<dbReference type="PANTHER" id="PTHR11278">
    <property type="entry name" value="40S RIBOSOMAL PROTEIN S7"/>
    <property type="match status" value="1"/>
</dbReference>
<dbReference type="PANTHER" id="PTHR11278:SF0">
    <property type="entry name" value="SMALL RIBOSOMAL SUBUNIT PROTEIN ES7"/>
    <property type="match status" value="1"/>
</dbReference>
<dbReference type="Pfam" id="PF01251">
    <property type="entry name" value="Ribosomal_S7e"/>
    <property type="match status" value="1"/>
</dbReference>
<dbReference type="PROSITE" id="PS00948">
    <property type="entry name" value="RIBOSOMAL_S7E"/>
    <property type="match status" value="1"/>
</dbReference>
<gene>
    <name type="primary">RPS7A</name>
    <name type="ordered locus">orf19.1700</name>
    <name type="ORF">CAALFM_C301490WA</name>
</gene>
<accession>Q5AJ93</accession>
<protein>
    <recommendedName>
        <fullName evidence="3">Small ribosomal subunit protein eS7</fullName>
    </recommendedName>
    <alternativeName>
        <fullName>40S ribosomal protein S7</fullName>
    </alternativeName>
</protein>